<organism>
    <name type="scientific">Aster yellows witches'-broom phytoplasma (strain AYWB)</name>
    <dbReference type="NCBI Taxonomy" id="322098"/>
    <lineage>
        <taxon>Bacteria</taxon>
        <taxon>Bacillati</taxon>
        <taxon>Mycoplasmatota</taxon>
        <taxon>Mollicutes</taxon>
        <taxon>Acholeplasmatales</taxon>
        <taxon>Acholeplasmataceae</taxon>
        <taxon>Candidatus Phytoplasma</taxon>
        <taxon>16SrI (Aster yellows group)</taxon>
    </lineage>
</organism>
<evidence type="ECO:0000255" key="1">
    <source>
        <dbReference type="HAMAP-Rule" id="MF_00036"/>
    </source>
</evidence>
<accession>Q2NJ60</accession>
<protein>
    <recommendedName>
        <fullName evidence="1">Alanine--tRNA ligase</fullName>
        <ecNumber evidence="1">6.1.1.7</ecNumber>
    </recommendedName>
    <alternativeName>
        <fullName evidence="1">Alanyl-tRNA synthetase</fullName>
        <shortName evidence="1">AlaRS</shortName>
    </alternativeName>
</protein>
<comment type="function">
    <text evidence="1">Catalyzes the attachment of alanine to tRNA(Ala) in a two-step reaction: alanine is first activated by ATP to form Ala-AMP and then transferred to the acceptor end of tRNA(Ala). Also edits incorrectly charged Ser-tRNA(Ala) and Gly-tRNA(Ala) via its editing domain.</text>
</comment>
<comment type="catalytic activity">
    <reaction evidence="1">
        <text>tRNA(Ala) + L-alanine + ATP = L-alanyl-tRNA(Ala) + AMP + diphosphate</text>
        <dbReference type="Rhea" id="RHEA:12540"/>
        <dbReference type="Rhea" id="RHEA-COMP:9657"/>
        <dbReference type="Rhea" id="RHEA-COMP:9923"/>
        <dbReference type="ChEBI" id="CHEBI:30616"/>
        <dbReference type="ChEBI" id="CHEBI:33019"/>
        <dbReference type="ChEBI" id="CHEBI:57972"/>
        <dbReference type="ChEBI" id="CHEBI:78442"/>
        <dbReference type="ChEBI" id="CHEBI:78497"/>
        <dbReference type="ChEBI" id="CHEBI:456215"/>
        <dbReference type="EC" id="6.1.1.7"/>
    </reaction>
</comment>
<comment type="cofactor">
    <cofactor evidence="1">
        <name>Zn(2+)</name>
        <dbReference type="ChEBI" id="CHEBI:29105"/>
    </cofactor>
    <text evidence="1">Binds 1 zinc ion per subunit.</text>
</comment>
<comment type="subcellular location">
    <subcellularLocation>
        <location evidence="1">Cytoplasm</location>
    </subcellularLocation>
</comment>
<comment type="domain">
    <text evidence="1">Consists of three domains; the N-terminal catalytic domain, the editing domain and the C-terminal C-Ala domain. The editing domain removes incorrectly charged amino acids, while the C-Ala domain, along with tRNA(Ala), serves as a bridge to cooperatively bring together the editing and aminoacylation centers thus stimulating deacylation of misacylated tRNAs.</text>
</comment>
<comment type="similarity">
    <text evidence="1">Belongs to the class-II aminoacyl-tRNA synthetase family.</text>
</comment>
<gene>
    <name evidence="1" type="primary">alaS</name>
    <name type="ordered locus">AYWB_416</name>
</gene>
<keyword id="KW-0030">Aminoacyl-tRNA synthetase</keyword>
<keyword id="KW-0067">ATP-binding</keyword>
<keyword id="KW-0963">Cytoplasm</keyword>
<keyword id="KW-0436">Ligase</keyword>
<keyword id="KW-0479">Metal-binding</keyword>
<keyword id="KW-0547">Nucleotide-binding</keyword>
<keyword id="KW-0648">Protein biosynthesis</keyword>
<keyword id="KW-0694">RNA-binding</keyword>
<keyword id="KW-0820">tRNA-binding</keyword>
<keyword id="KW-0862">Zinc</keyword>
<dbReference type="EC" id="6.1.1.7" evidence="1"/>
<dbReference type="EMBL" id="CP000061">
    <property type="protein sequence ID" value="ABC65533.1"/>
    <property type="molecule type" value="Genomic_DNA"/>
</dbReference>
<dbReference type="RefSeq" id="WP_011412697.1">
    <property type="nucleotide sequence ID" value="NC_007716.1"/>
</dbReference>
<dbReference type="SMR" id="Q2NJ60"/>
<dbReference type="STRING" id="322098.AYWB_416"/>
<dbReference type="KEGG" id="ayw:AYWB_416"/>
<dbReference type="eggNOG" id="COG0013">
    <property type="taxonomic scope" value="Bacteria"/>
</dbReference>
<dbReference type="HOGENOM" id="CLU_004485_1_1_14"/>
<dbReference type="OrthoDB" id="9803884at2"/>
<dbReference type="PhylomeDB" id="Q2NJ60"/>
<dbReference type="Proteomes" id="UP000001934">
    <property type="component" value="Chromosome"/>
</dbReference>
<dbReference type="GO" id="GO:0005829">
    <property type="term" value="C:cytosol"/>
    <property type="evidence" value="ECO:0007669"/>
    <property type="project" value="TreeGrafter"/>
</dbReference>
<dbReference type="GO" id="GO:0004813">
    <property type="term" value="F:alanine-tRNA ligase activity"/>
    <property type="evidence" value="ECO:0007669"/>
    <property type="project" value="UniProtKB-UniRule"/>
</dbReference>
<dbReference type="GO" id="GO:0002161">
    <property type="term" value="F:aminoacyl-tRNA deacylase activity"/>
    <property type="evidence" value="ECO:0007669"/>
    <property type="project" value="TreeGrafter"/>
</dbReference>
<dbReference type="GO" id="GO:0005524">
    <property type="term" value="F:ATP binding"/>
    <property type="evidence" value="ECO:0007669"/>
    <property type="project" value="UniProtKB-UniRule"/>
</dbReference>
<dbReference type="GO" id="GO:0000049">
    <property type="term" value="F:tRNA binding"/>
    <property type="evidence" value="ECO:0007669"/>
    <property type="project" value="UniProtKB-KW"/>
</dbReference>
<dbReference type="GO" id="GO:0008270">
    <property type="term" value="F:zinc ion binding"/>
    <property type="evidence" value="ECO:0007669"/>
    <property type="project" value="UniProtKB-UniRule"/>
</dbReference>
<dbReference type="GO" id="GO:0006419">
    <property type="term" value="P:alanyl-tRNA aminoacylation"/>
    <property type="evidence" value="ECO:0007669"/>
    <property type="project" value="UniProtKB-UniRule"/>
</dbReference>
<dbReference type="CDD" id="cd00673">
    <property type="entry name" value="AlaRS_core"/>
    <property type="match status" value="1"/>
</dbReference>
<dbReference type="FunFam" id="3.30.930.10:FF:000046">
    <property type="entry name" value="Alanine--tRNA ligase"/>
    <property type="match status" value="1"/>
</dbReference>
<dbReference type="FunFam" id="3.30.980.10:FF:000004">
    <property type="entry name" value="Alanine--tRNA ligase, cytoplasmic"/>
    <property type="match status" value="1"/>
</dbReference>
<dbReference type="Gene3D" id="2.40.30.130">
    <property type="match status" value="1"/>
</dbReference>
<dbReference type="Gene3D" id="3.10.310.40">
    <property type="match status" value="1"/>
</dbReference>
<dbReference type="Gene3D" id="3.30.930.10">
    <property type="entry name" value="Bira Bifunctional Protein, Domain 2"/>
    <property type="match status" value="1"/>
</dbReference>
<dbReference type="Gene3D" id="3.30.980.10">
    <property type="entry name" value="Threonyl-trna Synthetase, Chain A, domain 2"/>
    <property type="match status" value="1"/>
</dbReference>
<dbReference type="HAMAP" id="MF_00036_B">
    <property type="entry name" value="Ala_tRNA_synth_B"/>
    <property type="match status" value="1"/>
</dbReference>
<dbReference type="InterPro" id="IPR045864">
    <property type="entry name" value="aa-tRNA-synth_II/BPL/LPL"/>
</dbReference>
<dbReference type="InterPro" id="IPR002318">
    <property type="entry name" value="Ala-tRNA-lgiase_IIc"/>
</dbReference>
<dbReference type="InterPro" id="IPR018162">
    <property type="entry name" value="Ala-tRNA-ligase_IIc_anticod-bd"/>
</dbReference>
<dbReference type="InterPro" id="IPR018165">
    <property type="entry name" value="Ala-tRNA-synth_IIc_core"/>
</dbReference>
<dbReference type="InterPro" id="IPR018164">
    <property type="entry name" value="Ala-tRNA-synth_IIc_N"/>
</dbReference>
<dbReference type="InterPro" id="IPR050058">
    <property type="entry name" value="Ala-tRNA_ligase"/>
</dbReference>
<dbReference type="InterPro" id="IPR023033">
    <property type="entry name" value="Ala_tRNA_ligase_euk/bac"/>
</dbReference>
<dbReference type="InterPro" id="IPR003156">
    <property type="entry name" value="DHHA1_dom"/>
</dbReference>
<dbReference type="InterPro" id="IPR018163">
    <property type="entry name" value="Thr/Ala-tRNA-synth_IIc_edit"/>
</dbReference>
<dbReference type="InterPro" id="IPR009000">
    <property type="entry name" value="Transl_B-barrel_sf"/>
</dbReference>
<dbReference type="InterPro" id="IPR012947">
    <property type="entry name" value="tRNA_SAD"/>
</dbReference>
<dbReference type="NCBIfam" id="TIGR00344">
    <property type="entry name" value="alaS"/>
    <property type="match status" value="1"/>
</dbReference>
<dbReference type="PANTHER" id="PTHR11777:SF9">
    <property type="entry name" value="ALANINE--TRNA LIGASE, CYTOPLASMIC"/>
    <property type="match status" value="1"/>
</dbReference>
<dbReference type="PANTHER" id="PTHR11777">
    <property type="entry name" value="ALANYL-TRNA SYNTHETASE"/>
    <property type="match status" value="1"/>
</dbReference>
<dbReference type="Pfam" id="PF02272">
    <property type="entry name" value="DHHA1"/>
    <property type="match status" value="1"/>
</dbReference>
<dbReference type="Pfam" id="PF01411">
    <property type="entry name" value="tRNA-synt_2c"/>
    <property type="match status" value="1"/>
</dbReference>
<dbReference type="Pfam" id="PF07973">
    <property type="entry name" value="tRNA_SAD"/>
    <property type="match status" value="1"/>
</dbReference>
<dbReference type="PRINTS" id="PR00980">
    <property type="entry name" value="TRNASYNTHALA"/>
</dbReference>
<dbReference type="SMART" id="SM00863">
    <property type="entry name" value="tRNA_SAD"/>
    <property type="match status" value="1"/>
</dbReference>
<dbReference type="SUPFAM" id="SSF55681">
    <property type="entry name" value="Class II aaRS and biotin synthetases"/>
    <property type="match status" value="1"/>
</dbReference>
<dbReference type="SUPFAM" id="SSF101353">
    <property type="entry name" value="Putative anticodon-binding domain of alanyl-tRNA synthetase (AlaRS)"/>
    <property type="match status" value="1"/>
</dbReference>
<dbReference type="SUPFAM" id="SSF55186">
    <property type="entry name" value="ThrRS/AlaRS common domain"/>
    <property type="match status" value="1"/>
</dbReference>
<dbReference type="SUPFAM" id="SSF50447">
    <property type="entry name" value="Translation proteins"/>
    <property type="match status" value="1"/>
</dbReference>
<dbReference type="PROSITE" id="PS50860">
    <property type="entry name" value="AA_TRNA_LIGASE_II_ALA"/>
    <property type="match status" value="1"/>
</dbReference>
<reference key="1">
    <citation type="journal article" date="2006" name="J. Bacteriol.">
        <title>Living with genome instability: the adaptation of phytoplasmas to diverse environments of their insect and plant hosts.</title>
        <authorList>
            <person name="Bai X."/>
            <person name="Zhang J."/>
            <person name="Ewing A."/>
            <person name="Miller S.A."/>
            <person name="Jancso Radek A."/>
            <person name="Shevchenko D.V."/>
            <person name="Tsukerman K."/>
            <person name="Walunas T."/>
            <person name="Lapidus A."/>
            <person name="Campbell J.W."/>
            <person name="Hogenhout S.A."/>
        </authorList>
    </citation>
    <scope>NUCLEOTIDE SEQUENCE [LARGE SCALE GENOMIC DNA]</scope>
    <source>
        <strain>AYWB</strain>
    </source>
</reference>
<feature type="chain" id="PRO_0000347494" description="Alanine--tRNA ligase">
    <location>
        <begin position="1"/>
        <end position="864"/>
    </location>
</feature>
<feature type="binding site" evidence="1">
    <location>
        <position position="534"/>
    </location>
    <ligand>
        <name>Zn(2+)</name>
        <dbReference type="ChEBI" id="CHEBI:29105"/>
    </ligand>
</feature>
<feature type="binding site" evidence="1">
    <location>
        <position position="538"/>
    </location>
    <ligand>
        <name>Zn(2+)</name>
        <dbReference type="ChEBI" id="CHEBI:29105"/>
    </ligand>
</feature>
<feature type="binding site" evidence="1">
    <location>
        <position position="639"/>
    </location>
    <ligand>
        <name>Zn(2+)</name>
        <dbReference type="ChEBI" id="CHEBI:29105"/>
    </ligand>
</feature>
<feature type="binding site" evidence="1">
    <location>
        <position position="643"/>
    </location>
    <ligand>
        <name>Zn(2+)</name>
        <dbReference type="ChEBI" id="CHEBI:29105"/>
    </ligand>
</feature>
<name>SYA_AYWBP</name>
<proteinExistence type="inferred from homology"/>
<sequence>MTSFEIRQMWIKFFASKNHHIEKSFSLIPRNEDNLLWVNAGITPLKKYFDGTQTPSFRRITNVQKCIRTKDIKNVGKTSRHHTFFEMLGNFSIGNYFKKEAIHYAFELLTSPKWFGFPLEKLYITYFFQDQDTYQYWLDLGVNKNHLIHLKDNFWQIGPGPSGPCTEIFFDRGKTFDPRNKELIIEDLENDRFIEIWNIVFSQYNCDPKLPIEKYQELPSKNIDTGAGLERLACILQNTKTNFETDLFFPLIKALEKMTQITYTGQESFKIIADHLKTLVFAINDGAVLTNEKRGYVLKKLLRRAANEGKKLGLEKPFLYKLVPPTVAMMKDFYKELCTNQEMIAKVLLQQENIFEKTLKTAEKTFLQHLTQNTLSGKNFFKLYDTYGIPENLILDYAKKKNITTDYQKFQELLHEQQNLSKKNQTSQTNMNKQEEAFLHFLTPSEFIGYTNFACKTKVIKVFDEGIVLEKTPFYANMGGQIEDEGWIDNNKVTKITKLPNGQILHEFKGNFCEGQEVYACIDKTKRKQISYHHTATHLLEVVLQKQLGNHIKKQGSSVGFSSLRYDFNHFEKITPQTLLQIEKEVNQLIQKRVPVKIEQLSIQDAQKKYATLLEQNQKAKYKDKVRIVNIDTFSVDLCGGTHATNTKDLEHFTILSYESISSGIYRIEAVCNKNCQESLNAKLAPYQNELHQLTQKAKSLQTQNLDFEIKKFPPITKSYQDIINYQKHIKTQQQALVLFEKKVLEHHQKKMIQAESNFLPPQINKKMMLTIKEEKPLEVIKFFMNHIFYKYHLEVLFLSYVQPEKIVFLCQSKTLHAGNLIKEGVSLACGSGGGNASLAQGGTKKTQNLEKMLNFVKNKLKIN</sequence>